<feature type="chain" id="PRO_1000199227" description="Leucine--tRNA ligase">
    <location>
        <begin position="1"/>
        <end position="833"/>
    </location>
</feature>
<feature type="short sequence motif" description="'HIGH' region">
    <location>
        <begin position="41"/>
        <end position="52"/>
    </location>
</feature>
<feature type="short sequence motif" description="'KMSKS' region">
    <location>
        <begin position="610"/>
        <end position="614"/>
    </location>
</feature>
<feature type="binding site" evidence="1">
    <location>
        <position position="613"/>
    </location>
    <ligand>
        <name>ATP</name>
        <dbReference type="ChEBI" id="CHEBI:30616"/>
    </ligand>
</feature>
<dbReference type="EC" id="6.1.1.4" evidence="1"/>
<dbReference type="EMBL" id="CP000919">
    <property type="protein sequence ID" value="ACO18458.1"/>
    <property type="molecule type" value="Genomic_DNA"/>
</dbReference>
<dbReference type="RefSeq" id="WP_000011766.1">
    <property type="nucleotide sequence ID" value="NC_012466.1"/>
</dbReference>
<dbReference type="SMR" id="C1CC47"/>
<dbReference type="KEGG" id="sjj:SPJ_0266"/>
<dbReference type="HOGENOM" id="CLU_004427_0_0_9"/>
<dbReference type="Proteomes" id="UP000002206">
    <property type="component" value="Chromosome"/>
</dbReference>
<dbReference type="GO" id="GO:0005829">
    <property type="term" value="C:cytosol"/>
    <property type="evidence" value="ECO:0007669"/>
    <property type="project" value="TreeGrafter"/>
</dbReference>
<dbReference type="GO" id="GO:0002161">
    <property type="term" value="F:aminoacyl-tRNA deacylase activity"/>
    <property type="evidence" value="ECO:0007669"/>
    <property type="project" value="InterPro"/>
</dbReference>
<dbReference type="GO" id="GO:0005524">
    <property type="term" value="F:ATP binding"/>
    <property type="evidence" value="ECO:0007669"/>
    <property type="project" value="UniProtKB-UniRule"/>
</dbReference>
<dbReference type="GO" id="GO:0004823">
    <property type="term" value="F:leucine-tRNA ligase activity"/>
    <property type="evidence" value="ECO:0007669"/>
    <property type="project" value="UniProtKB-UniRule"/>
</dbReference>
<dbReference type="GO" id="GO:0006429">
    <property type="term" value="P:leucyl-tRNA aminoacylation"/>
    <property type="evidence" value="ECO:0007669"/>
    <property type="project" value="UniProtKB-UniRule"/>
</dbReference>
<dbReference type="CDD" id="cd07958">
    <property type="entry name" value="Anticodon_Ia_Leu_BEm"/>
    <property type="match status" value="1"/>
</dbReference>
<dbReference type="CDD" id="cd00812">
    <property type="entry name" value="LeuRS_core"/>
    <property type="match status" value="1"/>
</dbReference>
<dbReference type="FunFam" id="1.10.730.10:FF:000012">
    <property type="entry name" value="Leucine--tRNA ligase"/>
    <property type="match status" value="1"/>
</dbReference>
<dbReference type="FunFam" id="3.40.50.620:FF:000056">
    <property type="entry name" value="Leucine--tRNA ligase"/>
    <property type="match status" value="1"/>
</dbReference>
<dbReference type="FunFam" id="3.40.50.620:FF:000077">
    <property type="entry name" value="Leucine--tRNA ligase"/>
    <property type="match status" value="1"/>
</dbReference>
<dbReference type="FunFam" id="1.10.730.10:FF:000011">
    <property type="entry name" value="Leucine--tRNA ligase chloroplastic/mitochondrial"/>
    <property type="match status" value="1"/>
</dbReference>
<dbReference type="Gene3D" id="3.40.50.620">
    <property type="entry name" value="HUPs"/>
    <property type="match status" value="2"/>
</dbReference>
<dbReference type="Gene3D" id="1.10.730.10">
    <property type="entry name" value="Isoleucyl-tRNA Synthetase, Domain 1"/>
    <property type="match status" value="1"/>
</dbReference>
<dbReference type="Gene3D" id="3.90.740.10">
    <property type="entry name" value="Valyl/Leucyl/Isoleucyl-tRNA synthetase, editing domain"/>
    <property type="match status" value="1"/>
</dbReference>
<dbReference type="HAMAP" id="MF_00049_B">
    <property type="entry name" value="Leu_tRNA_synth_B"/>
    <property type="match status" value="1"/>
</dbReference>
<dbReference type="InterPro" id="IPR001412">
    <property type="entry name" value="aa-tRNA-synth_I_CS"/>
</dbReference>
<dbReference type="InterPro" id="IPR002300">
    <property type="entry name" value="aa-tRNA-synth_Ia"/>
</dbReference>
<dbReference type="InterPro" id="IPR002302">
    <property type="entry name" value="Leu-tRNA-ligase"/>
</dbReference>
<dbReference type="InterPro" id="IPR025709">
    <property type="entry name" value="Leu_tRNA-synth_edit"/>
</dbReference>
<dbReference type="InterPro" id="IPR013155">
    <property type="entry name" value="M/V/L/I-tRNA-synth_anticd-bd"/>
</dbReference>
<dbReference type="InterPro" id="IPR015413">
    <property type="entry name" value="Methionyl/Leucyl_tRNA_Synth"/>
</dbReference>
<dbReference type="InterPro" id="IPR014729">
    <property type="entry name" value="Rossmann-like_a/b/a_fold"/>
</dbReference>
<dbReference type="InterPro" id="IPR009080">
    <property type="entry name" value="tRNAsynth_Ia_anticodon-bd"/>
</dbReference>
<dbReference type="InterPro" id="IPR009008">
    <property type="entry name" value="Val/Leu/Ile-tRNA-synth_edit"/>
</dbReference>
<dbReference type="NCBIfam" id="TIGR00396">
    <property type="entry name" value="leuS_bact"/>
    <property type="match status" value="1"/>
</dbReference>
<dbReference type="PANTHER" id="PTHR43740:SF2">
    <property type="entry name" value="LEUCINE--TRNA LIGASE, MITOCHONDRIAL"/>
    <property type="match status" value="1"/>
</dbReference>
<dbReference type="PANTHER" id="PTHR43740">
    <property type="entry name" value="LEUCYL-TRNA SYNTHETASE"/>
    <property type="match status" value="1"/>
</dbReference>
<dbReference type="Pfam" id="PF08264">
    <property type="entry name" value="Anticodon_1"/>
    <property type="match status" value="1"/>
</dbReference>
<dbReference type="Pfam" id="PF00133">
    <property type="entry name" value="tRNA-synt_1"/>
    <property type="match status" value="2"/>
</dbReference>
<dbReference type="Pfam" id="PF13603">
    <property type="entry name" value="tRNA-synt_1_2"/>
    <property type="match status" value="1"/>
</dbReference>
<dbReference type="Pfam" id="PF09334">
    <property type="entry name" value="tRNA-synt_1g"/>
    <property type="match status" value="1"/>
</dbReference>
<dbReference type="PRINTS" id="PR00985">
    <property type="entry name" value="TRNASYNTHLEU"/>
</dbReference>
<dbReference type="SUPFAM" id="SSF47323">
    <property type="entry name" value="Anticodon-binding domain of a subclass of class I aminoacyl-tRNA synthetases"/>
    <property type="match status" value="1"/>
</dbReference>
<dbReference type="SUPFAM" id="SSF52374">
    <property type="entry name" value="Nucleotidylyl transferase"/>
    <property type="match status" value="1"/>
</dbReference>
<dbReference type="SUPFAM" id="SSF50677">
    <property type="entry name" value="ValRS/IleRS/LeuRS editing domain"/>
    <property type="match status" value="1"/>
</dbReference>
<dbReference type="PROSITE" id="PS00178">
    <property type="entry name" value="AA_TRNA_LIGASE_I"/>
    <property type="match status" value="1"/>
</dbReference>
<accession>C1CC47</accession>
<gene>
    <name evidence="1" type="primary">leuS</name>
    <name type="ordered locus">SPJ_0266</name>
</gene>
<evidence type="ECO:0000255" key="1">
    <source>
        <dbReference type="HAMAP-Rule" id="MF_00049"/>
    </source>
</evidence>
<organism>
    <name type="scientific">Streptococcus pneumoniae (strain JJA)</name>
    <dbReference type="NCBI Taxonomy" id="488222"/>
    <lineage>
        <taxon>Bacteria</taxon>
        <taxon>Bacillati</taxon>
        <taxon>Bacillota</taxon>
        <taxon>Bacilli</taxon>
        <taxon>Lactobacillales</taxon>
        <taxon>Streptococcaceae</taxon>
        <taxon>Streptococcus</taxon>
    </lineage>
</organism>
<protein>
    <recommendedName>
        <fullName evidence="1">Leucine--tRNA ligase</fullName>
        <ecNumber evidence="1">6.1.1.4</ecNumber>
    </recommendedName>
    <alternativeName>
        <fullName evidence="1">Leucyl-tRNA synthetase</fullName>
        <shortName evidence="1">LeuRS</shortName>
    </alternativeName>
</protein>
<keyword id="KW-0030">Aminoacyl-tRNA synthetase</keyword>
<keyword id="KW-0067">ATP-binding</keyword>
<keyword id="KW-0963">Cytoplasm</keyword>
<keyword id="KW-0436">Ligase</keyword>
<keyword id="KW-0547">Nucleotide-binding</keyword>
<keyword id="KW-0648">Protein biosynthesis</keyword>
<proteinExistence type="inferred from homology"/>
<name>SYL_STRZJ</name>
<comment type="catalytic activity">
    <reaction evidence="1">
        <text>tRNA(Leu) + L-leucine + ATP = L-leucyl-tRNA(Leu) + AMP + diphosphate</text>
        <dbReference type="Rhea" id="RHEA:11688"/>
        <dbReference type="Rhea" id="RHEA-COMP:9613"/>
        <dbReference type="Rhea" id="RHEA-COMP:9622"/>
        <dbReference type="ChEBI" id="CHEBI:30616"/>
        <dbReference type="ChEBI" id="CHEBI:33019"/>
        <dbReference type="ChEBI" id="CHEBI:57427"/>
        <dbReference type="ChEBI" id="CHEBI:78442"/>
        <dbReference type="ChEBI" id="CHEBI:78494"/>
        <dbReference type="ChEBI" id="CHEBI:456215"/>
        <dbReference type="EC" id="6.1.1.4"/>
    </reaction>
</comment>
<comment type="subcellular location">
    <subcellularLocation>
        <location evidence="1">Cytoplasm</location>
    </subcellularLocation>
</comment>
<comment type="similarity">
    <text evidence="1">Belongs to the class-I aminoacyl-tRNA synthetase family.</text>
</comment>
<reference key="1">
    <citation type="journal article" date="2010" name="Genome Biol.">
        <title>Structure and dynamics of the pan-genome of Streptococcus pneumoniae and closely related species.</title>
        <authorList>
            <person name="Donati C."/>
            <person name="Hiller N.L."/>
            <person name="Tettelin H."/>
            <person name="Muzzi A."/>
            <person name="Croucher N.J."/>
            <person name="Angiuoli S.V."/>
            <person name="Oggioni M."/>
            <person name="Dunning Hotopp J.C."/>
            <person name="Hu F.Z."/>
            <person name="Riley D.R."/>
            <person name="Covacci A."/>
            <person name="Mitchell T.J."/>
            <person name="Bentley S.D."/>
            <person name="Kilian M."/>
            <person name="Ehrlich G.D."/>
            <person name="Rappuoli R."/>
            <person name="Moxon E.R."/>
            <person name="Masignani V."/>
        </authorList>
    </citation>
    <scope>NUCLEOTIDE SEQUENCE [LARGE SCALE GENOMIC DNA]</scope>
    <source>
        <strain>JJA</strain>
    </source>
</reference>
<sequence length="833" mass="94339">MSFYNHKEIEPKWQGYWAEHHTFKTGTDASKPKFYALDMFPYPSGAGLHVGHPEGYTATDILSRYKRAQGYNVLHPMGWDAFGLPAEQYAMDTGNDPAEFTAENIANFKRQINALGFSYDWDREVNTTDPNYYKWTQWIFTKLYEKGLAYEAEVPVNWVEELGTAIANEEVLPDGTSERGGYPVVRKPMRQWMLKITAYAERLLNDLDELDWSESIKDMQRNWIGKSTGANVTFKVKGTDKEFTVFTTRPDTLFGATFTVLAPEHELVDAITSSEQAEAVADYKHQASLKSDLVRTDLAKEKTGVWTGAYAINPVNGKEMPIWIADYVLASYGTGAVMAVPAHDQRDWEFAKQFDLPIVEVLEGGNVEEAAYTEDGLHVNSDFLDGLNKEDAIAKIVACLEEKGCGQEKVTYRLRDWLFSRQRYWGEPIPIIHWEDGTSTAVPETELPLVLPVTKDIRPSGTGESPLANLTDWLEVTREDGVKGRRETNTMPQWAGSSWYYLRYIDPHNTEKLADEDLLKQWLPVDIYVGGAEHAVLHLLYARFWHKFLYDLGVVPTKEPFQKLFNQGMILGTSYRDHRGALVATDKVEKRDGSFFHIETGEELEQAPAKMSKSLKNVVNPDDVVEQYGADTLRVYEMFMGPLDASIAWSEEGLEGSRKFLDRVYRLITSKEILAENNGALDKAYNETVKAVTEQIESLKFNTAIAQLMVFVNAANKEDKLYVDYAKGFIQLIAPFAPHLAEELWQTVAETGESISYVAWPTWDESKLVEDEIEIVVQIKGKVRAKLMVAKDLSREELQEIALADEKVKAEIDGKEIVKVISVPNKLVNIVVK</sequence>